<name>T229B_MOUSE</name>
<dbReference type="EMBL" id="AK031901">
    <property type="protein sequence ID" value="BAC27598.1"/>
    <property type="molecule type" value="mRNA"/>
</dbReference>
<dbReference type="EMBL" id="AK033403">
    <property type="protein sequence ID" value="BAC28272.1"/>
    <property type="status" value="ALT_FRAME"/>
    <property type="molecule type" value="mRNA"/>
</dbReference>
<dbReference type="EMBL" id="AK036593">
    <property type="protein sequence ID" value="BAC29498.1"/>
    <property type="molecule type" value="mRNA"/>
</dbReference>
<dbReference type="EMBL" id="AK053623">
    <property type="protein sequence ID" value="BAC35450.1"/>
    <property type="molecule type" value="mRNA"/>
</dbReference>
<dbReference type="EMBL" id="AK149922">
    <property type="protein sequence ID" value="BAE29169.1"/>
    <property type="molecule type" value="mRNA"/>
</dbReference>
<dbReference type="EMBL" id="AK151405">
    <property type="protein sequence ID" value="BAE30372.1"/>
    <property type="molecule type" value="mRNA"/>
</dbReference>
<dbReference type="EMBL" id="AK169759">
    <property type="protein sequence ID" value="BAE41349.1"/>
    <property type="molecule type" value="mRNA"/>
</dbReference>
<dbReference type="EMBL" id="BC066067">
    <property type="protein sequence ID" value="AAH66067.1"/>
    <property type="molecule type" value="mRNA"/>
</dbReference>
<dbReference type="EMBL" id="BC079613">
    <property type="protein sequence ID" value="AAH79613.1"/>
    <property type="molecule type" value="mRNA"/>
</dbReference>
<dbReference type="CCDS" id="CCDS26005.1"/>
<dbReference type="RefSeq" id="NP_001163872.1">
    <property type="nucleotide sequence ID" value="NM_001170401.1"/>
</dbReference>
<dbReference type="RefSeq" id="NP_848860.1">
    <property type="nucleotide sequence ID" value="NM_178745.4"/>
</dbReference>
<dbReference type="RefSeq" id="XP_006515972.1">
    <property type="nucleotide sequence ID" value="XM_006515909.2"/>
</dbReference>
<dbReference type="RefSeq" id="XP_006515973.1">
    <property type="nucleotide sequence ID" value="XM_006515910.3"/>
</dbReference>
<dbReference type="RefSeq" id="XP_006515975.1">
    <property type="nucleotide sequence ID" value="XM_006515912.3"/>
</dbReference>
<dbReference type="RefSeq" id="XP_006515976.1">
    <property type="nucleotide sequence ID" value="XM_006515913.1"/>
</dbReference>
<dbReference type="RefSeq" id="XP_006515977.1">
    <property type="nucleotide sequence ID" value="XM_006515914.1"/>
</dbReference>
<dbReference type="RefSeq" id="XP_006515978.1">
    <property type="nucleotide sequence ID" value="XM_006515915.3"/>
</dbReference>
<dbReference type="RefSeq" id="XP_011242419.1">
    <property type="nucleotide sequence ID" value="XM_011244117.2"/>
</dbReference>
<dbReference type="FunCoup" id="Q8BFQ2">
    <property type="interactions" value="9"/>
</dbReference>
<dbReference type="STRING" id="10090.ENSMUSP00000053835"/>
<dbReference type="PaxDb" id="10090-ENSMUSP00000053835"/>
<dbReference type="ProteomicsDB" id="254627"/>
<dbReference type="Antibodypedia" id="52317">
    <property type="antibodies" value="5 antibodies from 5 providers"/>
</dbReference>
<dbReference type="Ensembl" id="ENSMUST00000056660.13">
    <property type="protein sequence ID" value="ENSMUSP00000053835.7"/>
    <property type="gene ID" value="ENSMUSG00000046157.14"/>
</dbReference>
<dbReference type="Ensembl" id="ENSMUST00000070174.14">
    <property type="protein sequence ID" value="ENSMUSP00000070637.8"/>
    <property type="gene ID" value="ENSMUSG00000046157.14"/>
</dbReference>
<dbReference type="Ensembl" id="ENSMUST00000174072.8">
    <property type="protein sequence ID" value="ENSMUSP00000134376.2"/>
    <property type="gene ID" value="ENSMUSG00000046157.14"/>
</dbReference>
<dbReference type="Ensembl" id="ENSMUST00000174697.2">
    <property type="protein sequence ID" value="ENSMUSP00000134348.2"/>
    <property type="gene ID" value="ENSMUSG00000046157.14"/>
</dbReference>
<dbReference type="GeneID" id="268567"/>
<dbReference type="KEGG" id="mmu:268567"/>
<dbReference type="UCSC" id="uc007nzm.2">
    <property type="organism name" value="mouse"/>
</dbReference>
<dbReference type="AGR" id="MGI:2444389"/>
<dbReference type="CTD" id="161145"/>
<dbReference type="MGI" id="MGI:2444389">
    <property type="gene designation" value="Tmem229b"/>
</dbReference>
<dbReference type="VEuPathDB" id="HostDB:ENSMUSG00000046157"/>
<dbReference type="eggNOG" id="ENOG502QTFF">
    <property type="taxonomic scope" value="Eukaryota"/>
</dbReference>
<dbReference type="GeneTree" id="ENSGT00390000010899"/>
<dbReference type="HOGENOM" id="CLU_102218_0_0_1"/>
<dbReference type="InParanoid" id="Q8BFQ2"/>
<dbReference type="OMA" id="DGWSNHR"/>
<dbReference type="OrthoDB" id="5946847at2759"/>
<dbReference type="PhylomeDB" id="Q8BFQ2"/>
<dbReference type="TreeFam" id="TF336481"/>
<dbReference type="BioGRID-ORCS" id="268567">
    <property type="hits" value="1 hit in 75 CRISPR screens"/>
</dbReference>
<dbReference type="ChiTaRS" id="Tmem229b">
    <property type="organism name" value="mouse"/>
</dbReference>
<dbReference type="PRO" id="PR:Q8BFQ2"/>
<dbReference type="Proteomes" id="UP000000589">
    <property type="component" value="Chromosome 12"/>
</dbReference>
<dbReference type="RNAct" id="Q8BFQ2">
    <property type="molecule type" value="protein"/>
</dbReference>
<dbReference type="Bgee" id="ENSMUSG00000046157">
    <property type="expression patterns" value="Expressed in cortical plate and 221 other cell types or tissues"/>
</dbReference>
<dbReference type="ExpressionAtlas" id="Q8BFQ2">
    <property type="expression patterns" value="baseline and differential"/>
</dbReference>
<dbReference type="GO" id="GO:0016020">
    <property type="term" value="C:membrane"/>
    <property type="evidence" value="ECO:0007669"/>
    <property type="project" value="UniProtKB-SubCell"/>
</dbReference>
<dbReference type="GO" id="GO:0042116">
    <property type="term" value="P:macrophage activation"/>
    <property type="evidence" value="ECO:0000314"/>
    <property type="project" value="MGI"/>
</dbReference>
<dbReference type="GO" id="GO:0009617">
    <property type="term" value="P:response to bacterium"/>
    <property type="evidence" value="ECO:0000270"/>
    <property type="project" value="MGI"/>
</dbReference>
<dbReference type="InterPro" id="IPR010540">
    <property type="entry name" value="CmpB_TMEM229"/>
</dbReference>
<dbReference type="PANTHER" id="PTHR31746">
    <property type="entry name" value="TRANSMEMBRANE PROTEIN 229 FAMILY MEMBER"/>
    <property type="match status" value="1"/>
</dbReference>
<dbReference type="PANTHER" id="PTHR31746:SF3">
    <property type="entry name" value="TRANSMEMBRANE PROTEIN 229B"/>
    <property type="match status" value="1"/>
</dbReference>
<dbReference type="Pfam" id="PF06541">
    <property type="entry name" value="ABC_trans_CmpB"/>
    <property type="match status" value="1"/>
</dbReference>
<protein>
    <recommendedName>
        <fullName>Transmembrane protein 229B</fullName>
    </recommendedName>
</protein>
<organism>
    <name type="scientific">Mus musculus</name>
    <name type="common">Mouse</name>
    <dbReference type="NCBI Taxonomy" id="10090"/>
    <lineage>
        <taxon>Eukaryota</taxon>
        <taxon>Metazoa</taxon>
        <taxon>Chordata</taxon>
        <taxon>Craniata</taxon>
        <taxon>Vertebrata</taxon>
        <taxon>Euteleostomi</taxon>
        <taxon>Mammalia</taxon>
        <taxon>Eutheria</taxon>
        <taxon>Euarchontoglires</taxon>
        <taxon>Glires</taxon>
        <taxon>Rodentia</taxon>
        <taxon>Myomorpha</taxon>
        <taxon>Muroidea</taxon>
        <taxon>Muridae</taxon>
        <taxon>Murinae</taxon>
        <taxon>Mus</taxon>
        <taxon>Mus</taxon>
    </lineage>
</organism>
<accession>Q8BFQ2</accession>
<accession>Q3UDU2</accession>
<accession>Q6AXE5</accession>
<accession>Q8CCD3</accession>
<feature type="chain" id="PRO_0000263682" description="Transmembrane protein 229B">
    <location>
        <begin position="1"/>
        <end position="167"/>
    </location>
</feature>
<feature type="topological domain" description="Cytoplasmic" evidence="1">
    <location>
        <begin position="1"/>
        <end position="14"/>
    </location>
</feature>
<feature type="transmembrane region" description="Helical" evidence="1">
    <location>
        <begin position="15"/>
        <end position="35"/>
    </location>
</feature>
<feature type="topological domain" description="Extracellular" evidence="1">
    <location>
        <begin position="36"/>
        <end position="40"/>
    </location>
</feature>
<feature type="transmembrane region" description="Helical" evidence="1">
    <location>
        <begin position="41"/>
        <end position="61"/>
    </location>
</feature>
<feature type="topological domain" description="Cytoplasmic" evidence="1">
    <location>
        <begin position="62"/>
        <end position="73"/>
    </location>
</feature>
<feature type="transmembrane region" description="Helical" evidence="1">
    <location>
        <begin position="74"/>
        <end position="94"/>
    </location>
</feature>
<feature type="topological domain" description="Extracellular" evidence="1">
    <location>
        <begin position="95"/>
        <end position="109"/>
    </location>
</feature>
<feature type="transmembrane region" description="Helical" evidence="1">
    <location>
        <begin position="110"/>
        <end position="130"/>
    </location>
</feature>
<feature type="topological domain" description="Cytoplasmic" evidence="1">
    <location>
        <begin position="131"/>
        <end position="167"/>
    </location>
</feature>
<feature type="region of interest" description="Disordered" evidence="2">
    <location>
        <begin position="148"/>
        <end position="167"/>
    </location>
</feature>
<feature type="sequence conflict" description="In Ref. 1; BAE29169." evidence="3" ref="1">
    <original>A</original>
    <variation>G</variation>
    <location>
        <position position="128"/>
    </location>
</feature>
<feature type="sequence conflict" description="In Ref. 2; AAH79613." evidence="3" ref="2">
    <original>P</original>
    <variation>S</variation>
    <location>
        <position position="153"/>
    </location>
</feature>
<gene>
    <name type="primary">TMEM229B</name>
</gene>
<keyword id="KW-0472">Membrane</keyword>
<keyword id="KW-1185">Reference proteome</keyword>
<keyword id="KW-0812">Transmembrane</keyword>
<keyword id="KW-1133">Transmembrane helix</keyword>
<comment type="subcellular location">
    <subcellularLocation>
        <location evidence="3">Membrane</location>
        <topology evidence="3">Multi-pass membrane protein</topology>
    </subcellularLocation>
</comment>
<comment type="similarity">
    <text evidence="3">Belongs to the TMEM229 family.</text>
</comment>
<comment type="sequence caution" evidence="3">
    <conflict type="frameshift">
        <sequence resource="EMBL-CDS" id="BAC28272"/>
    </conflict>
</comment>
<sequence length="167" mass="19561">MASAEPLTALSRWYLYAIHGYFCEVMFTAAWEFVVNFNWKFPGVTSVWALFIYGTSILIVERMYLRLRGRCPLLVRCVIYTLWTYLWEFTTGFILRQFNACPWDYSQFDFDFMGLITLEYAVPWFCGALIMEQFIIRNTLRLRFDKDAEPGEPASPPALANGHVKTD</sequence>
<reference key="1">
    <citation type="journal article" date="2005" name="Science">
        <title>The transcriptional landscape of the mammalian genome.</title>
        <authorList>
            <person name="Carninci P."/>
            <person name="Kasukawa T."/>
            <person name="Katayama S."/>
            <person name="Gough J."/>
            <person name="Frith M.C."/>
            <person name="Maeda N."/>
            <person name="Oyama R."/>
            <person name="Ravasi T."/>
            <person name="Lenhard B."/>
            <person name="Wells C."/>
            <person name="Kodzius R."/>
            <person name="Shimokawa K."/>
            <person name="Bajic V.B."/>
            <person name="Brenner S.E."/>
            <person name="Batalov S."/>
            <person name="Forrest A.R."/>
            <person name="Zavolan M."/>
            <person name="Davis M.J."/>
            <person name="Wilming L.G."/>
            <person name="Aidinis V."/>
            <person name="Allen J.E."/>
            <person name="Ambesi-Impiombato A."/>
            <person name="Apweiler R."/>
            <person name="Aturaliya R.N."/>
            <person name="Bailey T.L."/>
            <person name="Bansal M."/>
            <person name="Baxter L."/>
            <person name="Beisel K.W."/>
            <person name="Bersano T."/>
            <person name="Bono H."/>
            <person name="Chalk A.M."/>
            <person name="Chiu K.P."/>
            <person name="Choudhary V."/>
            <person name="Christoffels A."/>
            <person name="Clutterbuck D.R."/>
            <person name="Crowe M.L."/>
            <person name="Dalla E."/>
            <person name="Dalrymple B.P."/>
            <person name="de Bono B."/>
            <person name="Della Gatta G."/>
            <person name="di Bernardo D."/>
            <person name="Down T."/>
            <person name="Engstrom P."/>
            <person name="Fagiolini M."/>
            <person name="Faulkner G."/>
            <person name="Fletcher C.F."/>
            <person name="Fukushima T."/>
            <person name="Furuno M."/>
            <person name="Futaki S."/>
            <person name="Gariboldi M."/>
            <person name="Georgii-Hemming P."/>
            <person name="Gingeras T.R."/>
            <person name="Gojobori T."/>
            <person name="Green R.E."/>
            <person name="Gustincich S."/>
            <person name="Harbers M."/>
            <person name="Hayashi Y."/>
            <person name="Hensch T.K."/>
            <person name="Hirokawa N."/>
            <person name="Hill D."/>
            <person name="Huminiecki L."/>
            <person name="Iacono M."/>
            <person name="Ikeo K."/>
            <person name="Iwama A."/>
            <person name="Ishikawa T."/>
            <person name="Jakt M."/>
            <person name="Kanapin A."/>
            <person name="Katoh M."/>
            <person name="Kawasawa Y."/>
            <person name="Kelso J."/>
            <person name="Kitamura H."/>
            <person name="Kitano H."/>
            <person name="Kollias G."/>
            <person name="Krishnan S.P."/>
            <person name="Kruger A."/>
            <person name="Kummerfeld S.K."/>
            <person name="Kurochkin I.V."/>
            <person name="Lareau L.F."/>
            <person name="Lazarevic D."/>
            <person name="Lipovich L."/>
            <person name="Liu J."/>
            <person name="Liuni S."/>
            <person name="McWilliam S."/>
            <person name="Madan Babu M."/>
            <person name="Madera M."/>
            <person name="Marchionni L."/>
            <person name="Matsuda H."/>
            <person name="Matsuzawa S."/>
            <person name="Miki H."/>
            <person name="Mignone F."/>
            <person name="Miyake S."/>
            <person name="Morris K."/>
            <person name="Mottagui-Tabar S."/>
            <person name="Mulder N."/>
            <person name="Nakano N."/>
            <person name="Nakauchi H."/>
            <person name="Ng P."/>
            <person name="Nilsson R."/>
            <person name="Nishiguchi S."/>
            <person name="Nishikawa S."/>
            <person name="Nori F."/>
            <person name="Ohara O."/>
            <person name="Okazaki Y."/>
            <person name="Orlando V."/>
            <person name="Pang K.C."/>
            <person name="Pavan W.J."/>
            <person name="Pavesi G."/>
            <person name="Pesole G."/>
            <person name="Petrovsky N."/>
            <person name="Piazza S."/>
            <person name="Reed J."/>
            <person name="Reid J.F."/>
            <person name="Ring B.Z."/>
            <person name="Ringwald M."/>
            <person name="Rost B."/>
            <person name="Ruan Y."/>
            <person name="Salzberg S.L."/>
            <person name="Sandelin A."/>
            <person name="Schneider C."/>
            <person name="Schoenbach C."/>
            <person name="Sekiguchi K."/>
            <person name="Semple C.A."/>
            <person name="Seno S."/>
            <person name="Sessa L."/>
            <person name="Sheng Y."/>
            <person name="Shibata Y."/>
            <person name="Shimada H."/>
            <person name="Shimada K."/>
            <person name="Silva D."/>
            <person name="Sinclair B."/>
            <person name="Sperling S."/>
            <person name="Stupka E."/>
            <person name="Sugiura K."/>
            <person name="Sultana R."/>
            <person name="Takenaka Y."/>
            <person name="Taki K."/>
            <person name="Tammoja K."/>
            <person name="Tan S.L."/>
            <person name="Tang S."/>
            <person name="Taylor M.S."/>
            <person name="Tegner J."/>
            <person name="Teichmann S.A."/>
            <person name="Ueda H.R."/>
            <person name="van Nimwegen E."/>
            <person name="Verardo R."/>
            <person name="Wei C.L."/>
            <person name="Yagi K."/>
            <person name="Yamanishi H."/>
            <person name="Zabarovsky E."/>
            <person name="Zhu S."/>
            <person name="Zimmer A."/>
            <person name="Hide W."/>
            <person name="Bult C."/>
            <person name="Grimmond S.M."/>
            <person name="Teasdale R.D."/>
            <person name="Liu E.T."/>
            <person name="Brusic V."/>
            <person name="Quackenbush J."/>
            <person name="Wahlestedt C."/>
            <person name="Mattick J.S."/>
            <person name="Hume D.A."/>
            <person name="Kai C."/>
            <person name="Sasaki D."/>
            <person name="Tomaru Y."/>
            <person name="Fukuda S."/>
            <person name="Kanamori-Katayama M."/>
            <person name="Suzuki M."/>
            <person name="Aoki J."/>
            <person name="Arakawa T."/>
            <person name="Iida J."/>
            <person name="Imamura K."/>
            <person name="Itoh M."/>
            <person name="Kato T."/>
            <person name="Kawaji H."/>
            <person name="Kawagashira N."/>
            <person name="Kawashima T."/>
            <person name="Kojima M."/>
            <person name="Kondo S."/>
            <person name="Konno H."/>
            <person name="Nakano K."/>
            <person name="Ninomiya N."/>
            <person name="Nishio T."/>
            <person name="Okada M."/>
            <person name="Plessy C."/>
            <person name="Shibata K."/>
            <person name="Shiraki T."/>
            <person name="Suzuki S."/>
            <person name="Tagami M."/>
            <person name="Waki K."/>
            <person name="Watahiki A."/>
            <person name="Okamura-Oho Y."/>
            <person name="Suzuki H."/>
            <person name="Kawai J."/>
            <person name="Hayashizaki Y."/>
        </authorList>
    </citation>
    <scope>NUCLEOTIDE SEQUENCE [LARGE SCALE MRNA]</scope>
    <source>
        <strain>C57BL/6J</strain>
        <tissue>Bone</tissue>
        <tissue>Bone marrow macrophage</tissue>
        <tissue>Embryonic lung</tissue>
        <tissue>Eye</tissue>
        <tissue>Thymus</tissue>
    </source>
</reference>
<reference key="2">
    <citation type="journal article" date="2004" name="Genome Res.">
        <title>The status, quality, and expansion of the NIH full-length cDNA project: the Mammalian Gene Collection (MGC).</title>
        <authorList>
            <consortium name="The MGC Project Team"/>
        </authorList>
    </citation>
    <scope>NUCLEOTIDE SEQUENCE [LARGE SCALE MRNA]</scope>
    <source>
        <strain>C57BL/6J</strain>
        <tissue>Brain</tissue>
    </source>
</reference>
<proteinExistence type="evidence at transcript level"/>
<evidence type="ECO:0000255" key="1"/>
<evidence type="ECO:0000256" key="2">
    <source>
        <dbReference type="SAM" id="MobiDB-lite"/>
    </source>
</evidence>
<evidence type="ECO:0000305" key="3"/>